<proteinExistence type="inferred from homology"/>
<dbReference type="EC" id="2.1.1.-" evidence="1"/>
<dbReference type="EMBL" id="CP000416">
    <property type="protein sequence ID" value="ABJ65122.1"/>
    <property type="molecule type" value="Genomic_DNA"/>
</dbReference>
<dbReference type="RefSeq" id="WP_011668845.1">
    <property type="nucleotide sequence ID" value="NC_008497.1"/>
</dbReference>
<dbReference type="SMR" id="Q03NV0"/>
<dbReference type="STRING" id="387344.LVIS_2066"/>
<dbReference type="KEGG" id="lbr:LVIS_2066"/>
<dbReference type="eggNOG" id="COG0357">
    <property type="taxonomic scope" value="Bacteria"/>
</dbReference>
<dbReference type="HOGENOM" id="CLU_065341_0_2_9"/>
<dbReference type="Proteomes" id="UP000001652">
    <property type="component" value="Chromosome"/>
</dbReference>
<dbReference type="GO" id="GO:0005829">
    <property type="term" value="C:cytosol"/>
    <property type="evidence" value="ECO:0007669"/>
    <property type="project" value="TreeGrafter"/>
</dbReference>
<dbReference type="GO" id="GO:0070043">
    <property type="term" value="F:rRNA (guanine-N7-)-methyltransferase activity"/>
    <property type="evidence" value="ECO:0007669"/>
    <property type="project" value="UniProtKB-UniRule"/>
</dbReference>
<dbReference type="CDD" id="cd02440">
    <property type="entry name" value="AdoMet_MTases"/>
    <property type="match status" value="1"/>
</dbReference>
<dbReference type="FunFam" id="3.40.50.150:FF:000041">
    <property type="entry name" value="Ribosomal RNA small subunit methyltransferase G"/>
    <property type="match status" value="1"/>
</dbReference>
<dbReference type="Gene3D" id="3.40.50.150">
    <property type="entry name" value="Vaccinia Virus protein VP39"/>
    <property type="match status" value="1"/>
</dbReference>
<dbReference type="HAMAP" id="MF_00074">
    <property type="entry name" value="16SrRNA_methyltr_G"/>
    <property type="match status" value="1"/>
</dbReference>
<dbReference type="InterPro" id="IPR003682">
    <property type="entry name" value="rRNA_ssu_MeTfrase_G"/>
</dbReference>
<dbReference type="InterPro" id="IPR029063">
    <property type="entry name" value="SAM-dependent_MTases_sf"/>
</dbReference>
<dbReference type="NCBIfam" id="TIGR00138">
    <property type="entry name" value="rsmG_gidB"/>
    <property type="match status" value="1"/>
</dbReference>
<dbReference type="PANTHER" id="PTHR31760">
    <property type="entry name" value="S-ADENOSYL-L-METHIONINE-DEPENDENT METHYLTRANSFERASES SUPERFAMILY PROTEIN"/>
    <property type="match status" value="1"/>
</dbReference>
<dbReference type="PANTHER" id="PTHR31760:SF0">
    <property type="entry name" value="S-ADENOSYL-L-METHIONINE-DEPENDENT METHYLTRANSFERASES SUPERFAMILY PROTEIN"/>
    <property type="match status" value="1"/>
</dbReference>
<dbReference type="Pfam" id="PF02527">
    <property type="entry name" value="GidB"/>
    <property type="match status" value="1"/>
</dbReference>
<dbReference type="PIRSF" id="PIRSF003078">
    <property type="entry name" value="GidB"/>
    <property type="match status" value="1"/>
</dbReference>
<dbReference type="SUPFAM" id="SSF53335">
    <property type="entry name" value="S-adenosyl-L-methionine-dependent methyltransferases"/>
    <property type="match status" value="1"/>
</dbReference>
<evidence type="ECO:0000255" key="1">
    <source>
        <dbReference type="HAMAP-Rule" id="MF_00074"/>
    </source>
</evidence>
<comment type="function">
    <text evidence="1">Specifically methylates the N7 position of a guanine in 16S rRNA.</text>
</comment>
<comment type="subcellular location">
    <subcellularLocation>
        <location evidence="1">Cytoplasm</location>
    </subcellularLocation>
</comment>
<comment type="similarity">
    <text evidence="1">Belongs to the methyltransferase superfamily. RNA methyltransferase RsmG family.</text>
</comment>
<sequence length="242" mass="26481">MNPEEFRAALAAQGIDLTATQEQQFADYYQFLVATNEHVNLTTITAEPDVYLKHFYDSLTPAFYVSALRTEPLTLCDVGAGAGFPSLPLKIVFPQLQVTIVDSLNKRITFLNELAAKLNLTGVAFHHARAEEFGGKRAANREGFDLVTARAVARMSVLSELCLPLVKVGGQFVALKAAQTENELAVSQKAITTLGGKLQADEAFNLPVSNDPRHIVVIDKVKTTPKRYPRKAGTPNKEPLED</sequence>
<reference key="1">
    <citation type="journal article" date="2006" name="Proc. Natl. Acad. Sci. U.S.A.">
        <title>Comparative genomics of the lactic acid bacteria.</title>
        <authorList>
            <person name="Makarova K.S."/>
            <person name="Slesarev A."/>
            <person name="Wolf Y.I."/>
            <person name="Sorokin A."/>
            <person name="Mirkin B."/>
            <person name="Koonin E.V."/>
            <person name="Pavlov A."/>
            <person name="Pavlova N."/>
            <person name="Karamychev V."/>
            <person name="Polouchine N."/>
            <person name="Shakhova V."/>
            <person name="Grigoriev I."/>
            <person name="Lou Y."/>
            <person name="Rohksar D."/>
            <person name="Lucas S."/>
            <person name="Huang K."/>
            <person name="Goodstein D.M."/>
            <person name="Hawkins T."/>
            <person name="Plengvidhya V."/>
            <person name="Welker D."/>
            <person name="Hughes J."/>
            <person name="Goh Y."/>
            <person name="Benson A."/>
            <person name="Baldwin K."/>
            <person name="Lee J.-H."/>
            <person name="Diaz-Muniz I."/>
            <person name="Dosti B."/>
            <person name="Smeianov V."/>
            <person name="Wechter W."/>
            <person name="Barabote R."/>
            <person name="Lorca G."/>
            <person name="Altermann E."/>
            <person name="Barrangou R."/>
            <person name="Ganesan B."/>
            <person name="Xie Y."/>
            <person name="Rawsthorne H."/>
            <person name="Tamir D."/>
            <person name="Parker C."/>
            <person name="Breidt F."/>
            <person name="Broadbent J.R."/>
            <person name="Hutkins R."/>
            <person name="O'Sullivan D."/>
            <person name="Steele J."/>
            <person name="Unlu G."/>
            <person name="Saier M.H. Jr."/>
            <person name="Klaenhammer T."/>
            <person name="Richardson P."/>
            <person name="Kozyavkin S."/>
            <person name="Weimer B.C."/>
            <person name="Mills D.A."/>
        </authorList>
    </citation>
    <scope>NUCLEOTIDE SEQUENCE [LARGE SCALE GENOMIC DNA]</scope>
    <source>
        <strain>ATCC 367 / BCRC 12310 / CIP 105137 / JCM 1170 / LMG 11437 / NCIMB 947 / NCTC 947</strain>
    </source>
</reference>
<gene>
    <name evidence="1" type="primary">rsmG</name>
    <name type="ordered locus">LVIS_2066</name>
</gene>
<protein>
    <recommendedName>
        <fullName evidence="1">Ribosomal RNA small subunit methyltransferase G</fullName>
        <ecNumber evidence="1">2.1.1.-</ecNumber>
    </recommendedName>
    <alternativeName>
        <fullName evidence="1">16S rRNA 7-methylguanosine methyltransferase</fullName>
        <shortName evidence="1">16S rRNA m7G methyltransferase</shortName>
    </alternativeName>
</protein>
<organism>
    <name type="scientific">Levilactobacillus brevis (strain ATCC 367 / BCRC 12310 / CIP 105137 / JCM 1170 / LMG 11437 / NCIMB 947 / NCTC 947)</name>
    <name type="common">Lactobacillus brevis</name>
    <dbReference type="NCBI Taxonomy" id="387344"/>
    <lineage>
        <taxon>Bacteria</taxon>
        <taxon>Bacillati</taxon>
        <taxon>Bacillota</taxon>
        <taxon>Bacilli</taxon>
        <taxon>Lactobacillales</taxon>
        <taxon>Lactobacillaceae</taxon>
        <taxon>Levilactobacillus</taxon>
    </lineage>
</organism>
<feature type="chain" id="PRO_1000010156" description="Ribosomal RNA small subunit methyltransferase G">
    <location>
        <begin position="1"/>
        <end position="242"/>
    </location>
</feature>
<feature type="binding site" evidence="1">
    <location>
        <position position="79"/>
    </location>
    <ligand>
        <name>S-adenosyl-L-methionine</name>
        <dbReference type="ChEBI" id="CHEBI:59789"/>
    </ligand>
</feature>
<feature type="binding site" evidence="1">
    <location>
        <position position="84"/>
    </location>
    <ligand>
        <name>S-adenosyl-L-methionine</name>
        <dbReference type="ChEBI" id="CHEBI:59789"/>
    </ligand>
</feature>
<feature type="binding site" evidence="1">
    <location>
        <begin position="130"/>
        <end position="131"/>
    </location>
    <ligand>
        <name>S-adenosyl-L-methionine</name>
        <dbReference type="ChEBI" id="CHEBI:59789"/>
    </ligand>
</feature>
<feature type="binding site" evidence="1">
    <location>
        <position position="150"/>
    </location>
    <ligand>
        <name>S-adenosyl-L-methionine</name>
        <dbReference type="ChEBI" id="CHEBI:59789"/>
    </ligand>
</feature>
<keyword id="KW-0963">Cytoplasm</keyword>
<keyword id="KW-0489">Methyltransferase</keyword>
<keyword id="KW-1185">Reference proteome</keyword>
<keyword id="KW-0698">rRNA processing</keyword>
<keyword id="KW-0949">S-adenosyl-L-methionine</keyword>
<keyword id="KW-0808">Transferase</keyword>
<name>RSMG_LEVBA</name>
<accession>Q03NV0</accession>